<name>HSCB_SHEFN</name>
<protein>
    <recommendedName>
        <fullName evidence="1">Co-chaperone protein HscB homolog</fullName>
    </recommendedName>
</protein>
<accession>Q080P9</accession>
<reference key="1">
    <citation type="submission" date="2006-08" db="EMBL/GenBank/DDBJ databases">
        <title>Complete sequence of Shewanella frigidimarina NCIMB 400.</title>
        <authorList>
            <consortium name="US DOE Joint Genome Institute"/>
            <person name="Copeland A."/>
            <person name="Lucas S."/>
            <person name="Lapidus A."/>
            <person name="Barry K."/>
            <person name="Detter J.C."/>
            <person name="Glavina del Rio T."/>
            <person name="Hammon N."/>
            <person name="Israni S."/>
            <person name="Dalin E."/>
            <person name="Tice H."/>
            <person name="Pitluck S."/>
            <person name="Fredrickson J.K."/>
            <person name="Kolker E."/>
            <person name="McCuel L.A."/>
            <person name="DiChristina T."/>
            <person name="Nealson K.H."/>
            <person name="Newman D."/>
            <person name="Tiedje J.M."/>
            <person name="Zhou J."/>
            <person name="Romine M.F."/>
            <person name="Culley D.E."/>
            <person name="Serres M."/>
            <person name="Chertkov O."/>
            <person name="Brettin T."/>
            <person name="Bruce D."/>
            <person name="Han C."/>
            <person name="Tapia R."/>
            <person name="Gilna P."/>
            <person name="Schmutz J."/>
            <person name="Larimer F."/>
            <person name="Land M."/>
            <person name="Hauser L."/>
            <person name="Kyrpides N."/>
            <person name="Mikhailova N."/>
            <person name="Richardson P."/>
        </authorList>
    </citation>
    <scope>NUCLEOTIDE SEQUENCE [LARGE SCALE GENOMIC DNA]</scope>
    <source>
        <strain>NCIMB 400</strain>
    </source>
</reference>
<feature type="chain" id="PRO_1000083038" description="Co-chaperone protein HscB homolog">
    <location>
        <begin position="1"/>
        <end position="174"/>
    </location>
</feature>
<feature type="domain" description="J" evidence="1">
    <location>
        <begin position="2"/>
        <end position="74"/>
    </location>
</feature>
<comment type="function">
    <text evidence="1">Co-chaperone involved in the maturation of iron-sulfur cluster-containing proteins. Seems to help targeting proteins to be folded toward HscA.</text>
</comment>
<comment type="subunit">
    <text evidence="1">Interacts with HscA and stimulates its ATPase activity.</text>
</comment>
<comment type="similarity">
    <text evidence="1">Belongs to the HscB family.</text>
</comment>
<dbReference type="EMBL" id="CP000447">
    <property type="protein sequence ID" value="ABI72266.1"/>
    <property type="molecule type" value="Genomic_DNA"/>
</dbReference>
<dbReference type="RefSeq" id="WP_011637875.1">
    <property type="nucleotide sequence ID" value="NC_008345.1"/>
</dbReference>
<dbReference type="SMR" id="Q080P9"/>
<dbReference type="STRING" id="318167.Sfri_2421"/>
<dbReference type="KEGG" id="sfr:Sfri_2421"/>
<dbReference type="eggNOG" id="COG1076">
    <property type="taxonomic scope" value="Bacteria"/>
</dbReference>
<dbReference type="HOGENOM" id="CLU_068529_2_0_6"/>
<dbReference type="OrthoDB" id="287587at2"/>
<dbReference type="Proteomes" id="UP000000684">
    <property type="component" value="Chromosome"/>
</dbReference>
<dbReference type="GO" id="GO:1990230">
    <property type="term" value="C:iron-sulfur cluster transfer complex"/>
    <property type="evidence" value="ECO:0007669"/>
    <property type="project" value="TreeGrafter"/>
</dbReference>
<dbReference type="GO" id="GO:0001671">
    <property type="term" value="F:ATPase activator activity"/>
    <property type="evidence" value="ECO:0007669"/>
    <property type="project" value="InterPro"/>
</dbReference>
<dbReference type="GO" id="GO:0051087">
    <property type="term" value="F:protein-folding chaperone binding"/>
    <property type="evidence" value="ECO:0007669"/>
    <property type="project" value="InterPro"/>
</dbReference>
<dbReference type="GO" id="GO:0044571">
    <property type="term" value="P:[2Fe-2S] cluster assembly"/>
    <property type="evidence" value="ECO:0007669"/>
    <property type="project" value="InterPro"/>
</dbReference>
<dbReference type="GO" id="GO:0051259">
    <property type="term" value="P:protein complex oligomerization"/>
    <property type="evidence" value="ECO:0007669"/>
    <property type="project" value="InterPro"/>
</dbReference>
<dbReference type="GO" id="GO:0006457">
    <property type="term" value="P:protein folding"/>
    <property type="evidence" value="ECO:0007669"/>
    <property type="project" value="UniProtKB-UniRule"/>
</dbReference>
<dbReference type="CDD" id="cd06257">
    <property type="entry name" value="DnaJ"/>
    <property type="match status" value="1"/>
</dbReference>
<dbReference type="Gene3D" id="1.10.287.110">
    <property type="entry name" value="DnaJ domain"/>
    <property type="match status" value="1"/>
</dbReference>
<dbReference type="Gene3D" id="1.20.1280.20">
    <property type="entry name" value="HscB, C-terminal domain"/>
    <property type="match status" value="1"/>
</dbReference>
<dbReference type="HAMAP" id="MF_00682">
    <property type="entry name" value="HscB"/>
    <property type="match status" value="1"/>
</dbReference>
<dbReference type="InterPro" id="IPR001623">
    <property type="entry name" value="DnaJ_domain"/>
</dbReference>
<dbReference type="InterPro" id="IPR004640">
    <property type="entry name" value="HscB"/>
</dbReference>
<dbReference type="InterPro" id="IPR036386">
    <property type="entry name" value="HscB_C_sf"/>
</dbReference>
<dbReference type="InterPro" id="IPR009073">
    <property type="entry name" value="HscB_oligo_C"/>
</dbReference>
<dbReference type="InterPro" id="IPR036869">
    <property type="entry name" value="J_dom_sf"/>
</dbReference>
<dbReference type="NCBIfam" id="TIGR00714">
    <property type="entry name" value="hscB"/>
    <property type="match status" value="1"/>
</dbReference>
<dbReference type="NCBIfam" id="NF003449">
    <property type="entry name" value="PRK05014.1"/>
    <property type="match status" value="1"/>
</dbReference>
<dbReference type="PANTHER" id="PTHR14021">
    <property type="entry name" value="IRON-SULFUR CLUSTER CO-CHAPERONE PROTEIN HSCB"/>
    <property type="match status" value="1"/>
</dbReference>
<dbReference type="PANTHER" id="PTHR14021:SF15">
    <property type="entry name" value="IRON-SULFUR CLUSTER CO-CHAPERONE PROTEIN HSCB"/>
    <property type="match status" value="1"/>
</dbReference>
<dbReference type="Pfam" id="PF07743">
    <property type="entry name" value="HSCB_C"/>
    <property type="match status" value="1"/>
</dbReference>
<dbReference type="SMART" id="SM00271">
    <property type="entry name" value="DnaJ"/>
    <property type="match status" value="1"/>
</dbReference>
<dbReference type="SUPFAM" id="SSF46565">
    <property type="entry name" value="Chaperone J-domain"/>
    <property type="match status" value="1"/>
</dbReference>
<dbReference type="SUPFAM" id="SSF47144">
    <property type="entry name" value="HSC20 (HSCB), C-terminal oligomerisation domain"/>
    <property type="match status" value="1"/>
</dbReference>
<dbReference type="PROSITE" id="PS50076">
    <property type="entry name" value="DNAJ_2"/>
    <property type="match status" value="1"/>
</dbReference>
<sequence length="174" mass="20001">MNYFDLFNVVPAFDIDTALLAERYRELQRAVHPDKFANDTEQQKLLSVQRTAQVNDGYQTLKNPLRRAEHMLSLRGIELSHETTTLKDGAFLMQQMEWREALEDIQHNSDPQSSIDELYESFGEFESTLLTKLATLLISDESADALLAADQIRKLKFMAKLHDELARIEDGLLD</sequence>
<keyword id="KW-0143">Chaperone</keyword>
<keyword id="KW-1185">Reference proteome</keyword>
<organism>
    <name type="scientific">Shewanella frigidimarina (strain NCIMB 400)</name>
    <dbReference type="NCBI Taxonomy" id="318167"/>
    <lineage>
        <taxon>Bacteria</taxon>
        <taxon>Pseudomonadati</taxon>
        <taxon>Pseudomonadota</taxon>
        <taxon>Gammaproteobacteria</taxon>
        <taxon>Alteromonadales</taxon>
        <taxon>Shewanellaceae</taxon>
        <taxon>Shewanella</taxon>
    </lineage>
</organism>
<gene>
    <name evidence="1" type="primary">hscB</name>
    <name type="ordered locus">Sfri_2421</name>
</gene>
<proteinExistence type="inferred from homology"/>
<evidence type="ECO:0000255" key="1">
    <source>
        <dbReference type="HAMAP-Rule" id="MF_00682"/>
    </source>
</evidence>